<organism>
    <name type="scientific">Tetrahymena pyriformis</name>
    <dbReference type="NCBI Taxonomy" id="5908"/>
    <lineage>
        <taxon>Eukaryota</taxon>
        <taxon>Sar</taxon>
        <taxon>Alveolata</taxon>
        <taxon>Ciliophora</taxon>
        <taxon>Intramacronucleata</taxon>
        <taxon>Oligohymenophorea</taxon>
        <taxon>Hymenostomatida</taxon>
        <taxon>Tetrahymenina</taxon>
        <taxon>Tetrahymenidae</taxon>
        <taxon>Tetrahymena</taxon>
    </lineage>
</organism>
<reference key="1">
    <citation type="journal article" date="1997" name="Biochem. J.">
        <title>The third member of the Tetrahymena CCT subunit gene family, TpCCT alpha, encodes a component of the hetero-oligomeric chaperonin complex.</title>
        <authorList>
            <person name="Soares H."/>
            <person name="Cyrne L."/>
            <person name="Casalou C."/>
            <person name="Ehmann B."/>
            <person name="Rodrigues-Pousada C."/>
        </authorList>
    </citation>
    <scope>NUCLEOTIDE SEQUENCE [GENOMIC DNA]</scope>
    <source>
        <strain>CGL</strain>
    </source>
</reference>
<proteinExistence type="inferred from homology"/>
<protein>
    <recommendedName>
        <fullName>T-complex protein 1 subunit alpha</fullName>
        <shortName>TCP-1-alpha</shortName>
    </recommendedName>
    <alternativeName>
        <fullName>CCT-alpha</fullName>
    </alternativeName>
</protein>
<comment type="function">
    <text>Molecular chaperone; assists the folding of proteins upon ATP hydrolysis. Known to play a role, in vitro, in the folding of actin and tubulin.</text>
</comment>
<comment type="subunit">
    <text>Heterooligomeric complex of about 850 to 900 kDa that forms two stacked rings, 12 to 16 nm in diameter.</text>
</comment>
<comment type="subcellular location">
    <subcellularLocation>
        <location>Cytoplasm</location>
    </subcellularLocation>
</comment>
<comment type="similarity">
    <text evidence="1">Belongs to the TCP-1 chaperonin family.</text>
</comment>
<keyword id="KW-0067">ATP-binding</keyword>
<keyword id="KW-0143">Chaperone</keyword>
<keyword id="KW-0963">Cytoplasm</keyword>
<keyword id="KW-0547">Nucleotide-binding</keyword>
<accession>O15891</accession>
<dbReference type="EMBL" id="U85397">
    <property type="protein sequence ID" value="AAC47799.1"/>
    <property type="molecule type" value="Genomic_DNA"/>
</dbReference>
<dbReference type="SMR" id="O15891"/>
<dbReference type="GO" id="GO:0005737">
    <property type="term" value="C:cytoplasm"/>
    <property type="evidence" value="ECO:0007669"/>
    <property type="project" value="UniProtKB-SubCell"/>
</dbReference>
<dbReference type="GO" id="GO:0005524">
    <property type="term" value="F:ATP binding"/>
    <property type="evidence" value="ECO:0007669"/>
    <property type="project" value="UniProtKB-KW"/>
</dbReference>
<dbReference type="GO" id="GO:0016887">
    <property type="term" value="F:ATP hydrolysis activity"/>
    <property type="evidence" value="ECO:0007669"/>
    <property type="project" value="InterPro"/>
</dbReference>
<dbReference type="GO" id="GO:0140662">
    <property type="term" value="F:ATP-dependent protein folding chaperone"/>
    <property type="evidence" value="ECO:0007669"/>
    <property type="project" value="InterPro"/>
</dbReference>
<dbReference type="GO" id="GO:0051082">
    <property type="term" value="F:unfolded protein binding"/>
    <property type="evidence" value="ECO:0007669"/>
    <property type="project" value="InterPro"/>
</dbReference>
<dbReference type="CDD" id="cd03335">
    <property type="entry name" value="TCP1_alpha"/>
    <property type="match status" value="1"/>
</dbReference>
<dbReference type="FunFam" id="1.10.560.10:FF:000070">
    <property type="entry name" value="Uncharacterized protein"/>
    <property type="match status" value="1"/>
</dbReference>
<dbReference type="Gene3D" id="3.50.7.10">
    <property type="entry name" value="GroEL"/>
    <property type="match status" value="1"/>
</dbReference>
<dbReference type="Gene3D" id="1.10.560.10">
    <property type="entry name" value="GroEL-like equatorial domain"/>
    <property type="match status" value="1"/>
</dbReference>
<dbReference type="Gene3D" id="3.30.260.10">
    <property type="entry name" value="TCP-1-like chaperonin intermediate domain"/>
    <property type="match status" value="1"/>
</dbReference>
<dbReference type="InterPro" id="IPR012715">
    <property type="entry name" value="Chap_CCT_alpha"/>
</dbReference>
<dbReference type="InterPro" id="IPR017998">
    <property type="entry name" value="Chaperone_TCP-1"/>
</dbReference>
<dbReference type="InterPro" id="IPR002194">
    <property type="entry name" value="Chaperonin_TCP-1_CS"/>
</dbReference>
<dbReference type="InterPro" id="IPR002423">
    <property type="entry name" value="Cpn60/GroEL/TCP-1"/>
</dbReference>
<dbReference type="InterPro" id="IPR027409">
    <property type="entry name" value="GroEL-like_apical_dom_sf"/>
</dbReference>
<dbReference type="InterPro" id="IPR027413">
    <property type="entry name" value="GROEL-like_equatorial_sf"/>
</dbReference>
<dbReference type="InterPro" id="IPR027410">
    <property type="entry name" value="TCP-1-like_intermed_sf"/>
</dbReference>
<dbReference type="InterPro" id="IPR053374">
    <property type="entry name" value="TCP-1_chaperonin"/>
</dbReference>
<dbReference type="InterPro" id="IPR054827">
    <property type="entry name" value="thermosome_alpha"/>
</dbReference>
<dbReference type="NCBIfam" id="TIGR02340">
    <property type="entry name" value="chap_CCT_alpha"/>
    <property type="match status" value="1"/>
</dbReference>
<dbReference type="NCBIfam" id="NF041082">
    <property type="entry name" value="thermosome_alpha"/>
    <property type="match status" value="1"/>
</dbReference>
<dbReference type="NCBIfam" id="NF041083">
    <property type="entry name" value="thermosome_beta"/>
    <property type="match status" value="1"/>
</dbReference>
<dbReference type="PANTHER" id="PTHR11353">
    <property type="entry name" value="CHAPERONIN"/>
    <property type="match status" value="1"/>
</dbReference>
<dbReference type="Pfam" id="PF00118">
    <property type="entry name" value="Cpn60_TCP1"/>
    <property type="match status" value="1"/>
</dbReference>
<dbReference type="PRINTS" id="PR00304">
    <property type="entry name" value="TCOMPLEXTCP1"/>
</dbReference>
<dbReference type="SUPFAM" id="SSF52029">
    <property type="entry name" value="GroEL apical domain-like"/>
    <property type="match status" value="1"/>
</dbReference>
<dbReference type="SUPFAM" id="SSF48592">
    <property type="entry name" value="GroEL equatorial domain-like"/>
    <property type="match status" value="1"/>
</dbReference>
<dbReference type="SUPFAM" id="SSF54849">
    <property type="entry name" value="GroEL-intermediate domain like"/>
    <property type="match status" value="1"/>
</dbReference>
<dbReference type="PROSITE" id="PS00750">
    <property type="entry name" value="TCP1_1"/>
    <property type="match status" value="1"/>
</dbReference>
<dbReference type="PROSITE" id="PS00751">
    <property type="entry name" value="TCP1_2"/>
    <property type="match status" value="1"/>
</dbReference>
<dbReference type="PROSITE" id="PS00995">
    <property type="entry name" value="TCP1_3"/>
    <property type="match status" value="1"/>
</dbReference>
<evidence type="ECO:0000305" key="1"/>
<feature type="chain" id="PRO_0000128312" description="T-complex protein 1 subunit alpha">
    <location>
        <begin position="1"/>
        <end position="547"/>
    </location>
</feature>
<sequence length="547" mass="59543">MAPSVGILGERDQGQDVRTNNVTAVMAIANIVKSSLGPQGLDKMLVDDVGDVTITNDGATILRQLEVQHPAAKVIVELSQLQDKEVGDGTTSVVILAAELLKRANELIKNKVHPTSIITGFKIAAKEACTYIKEHLAISVEELGREALINAAKTSMSSKLIGPESNLFSQIVVDAVESVKMTNLMGDTKYPIKNVKIIKSHGQSTLQSQLIRGYVLQTQRCDQQMKTRIEKAKIALLDFNLNKFRLQMGIQILVNDPKNLEKIRFKECEILKERCKKIIEAGANVIITSAGMDDVATKYLVEAGVMGLRRVDKHDLRRLAKATGGTIVTTLATPEGDEVFEASYLGECAEVYEEAVGDNDCIFFKGTKRANCASIIIRGANEFMVDEVDRSLHDSLCVVKRTLESGYVVPGGGAVEIALSIKLEDFARTLGTKEQTAVAEFCEALNIIPKVLAANAAQDATELVSKLRALHAASQSSDDPAKKELKNCGLDLSLGKVRNNVKAGVLEPMVSKIKSLRFATEAAITILRIDDMIKLNPQNEELPQGRH</sequence>
<name>TCPA_TETPY</name>